<accession>Q9H0L4</accession>
<accession>B2RAR9</accession>
<accession>O75174</accession>
<accession>Q53HK6</accession>
<accession>Q7LGE8</accession>
<accession>Q8N6T1</accession>
<proteinExistence type="evidence at protein level"/>
<keyword id="KW-0507">mRNA processing</keyword>
<keyword id="KW-0539">Nucleus</keyword>
<keyword id="KW-0597">Phosphoprotein</keyword>
<keyword id="KW-1267">Proteomics identification</keyword>
<keyword id="KW-1185">Reference proteome</keyword>
<keyword id="KW-0677">Repeat</keyword>
<keyword id="KW-0694">RNA-binding</keyword>
<feature type="chain" id="PRO_0000081534" description="Cleavage stimulation factor subunit 2 tau variant">
    <location>
        <begin position="1"/>
        <end position="616"/>
    </location>
</feature>
<feature type="domain" description="RRM" evidence="2">
    <location>
        <begin position="16"/>
        <end position="94"/>
    </location>
</feature>
<feature type="repeat" description="1-1">
    <location>
        <begin position="418"/>
        <end position="422"/>
    </location>
</feature>
<feature type="repeat" description="1-2; approximate">
    <location>
        <begin position="423"/>
        <end position="427"/>
    </location>
</feature>
<feature type="repeat" description="1-3; approximate">
    <location>
        <begin position="428"/>
        <end position="432"/>
    </location>
</feature>
<feature type="repeat" description="1-4; approximate">
    <location>
        <begin position="433"/>
        <end position="437"/>
    </location>
</feature>
<feature type="repeat" description="1-5; approximate">
    <location>
        <begin position="438"/>
        <end position="442"/>
    </location>
</feature>
<feature type="repeat" description="1-6">
    <location>
        <begin position="443"/>
        <end position="447"/>
    </location>
</feature>
<feature type="repeat" description="1-7; approximate">
    <location>
        <begin position="448"/>
        <end position="452"/>
    </location>
</feature>
<feature type="repeat" description="1-8; approximate">
    <location>
        <begin position="453"/>
        <end position="457"/>
    </location>
</feature>
<feature type="repeat" description="1-9; approximate">
    <location>
        <begin position="458"/>
        <end position="462"/>
    </location>
</feature>
<feature type="repeat" description="2-1">
    <location>
        <begin position="505"/>
        <end position="509"/>
    </location>
</feature>
<feature type="repeat" description="2-2">
    <location>
        <begin position="510"/>
        <end position="514"/>
    </location>
</feature>
<feature type="repeat" description="2-3">
    <location>
        <begin position="515"/>
        <end position="519"/>
    </location>
</feature>
<feature type="repeat" description="2-4">
    <location>
        <begin position="520"/>
        <end position="524"/>
    </location>
</feature>
<feature type="repeat" description="2-5; approximate">
    <location>
        <begin position="525"/>
        <end position="529"/>
    </location>
</feature>
<feature type="repeat" description="2-6">
    <location>
        <begin position="530"/>
        <end position="534"/>
    </location>
</feature>
<feature type="repeat" description="2-7; approximate">
    <location>
        <begin position="535"/>
        <end position="539"/>
    </location>
</feature>
<feature type="repeat" description="2-8; approximate">
    <location>
        <begin position="540"/>
        <end position="544"/>
    </location>
</feature>
<feature type="repeat" description="2-9; approximate">
    <location>
        <begin position="545"/>
        <end position="549"/>
    </location>
</feature>
<feature type="region of interest" description="Disordered" evidence="3">
    <location>
        <begin position="203"/>
        <end position="241"/>
    </location>
</feature>
<feature type="region of interest" description="Disordered" evidence="3">
    <location>
        <begin position="262"/>
        <end position="418"/>
    </location>
</feature>
<feature type="region of interest" description="9 X 5 AA tandem repeats of M-E-T-R-[AG]">
    <location>
        <begin position="418"/>
        <end position="462"/>
    </location>
</feature>
<feature type="region of interest" description="9 X 5 AA tandem repeats of G-[AT]-G-[MI]-Q">
    <location>
        <begin position="505"/>
        <end position="549"/>
    </location>
</feature>
<feature type="region of interest" description="Disordered" evidence="3">
    <location>
        <begin position="542"/>
        <end position="573"/>
    </location>
</feature>
<feature type="compositionally biased region" description="Low complexity" evidence="3">
    <location>
        <begin position="223"/>
        <end position="233"/>
    </location>
</feature>
<feature type="compositionally biased region" description="Low complexity" evidence="3">
    <location>
        <begin position="319"/>
        <end position="331"/>
    </location>
</feature>
<feature type="compositionally biased region" description="Basic and acidic residues" evidence="3">
    <location>
        <begin position="368"/>
        <end position="381"/>
    </location>
</feature>
<feature type="compositionally biased region" description="Low complexity" evidence="3">
    <location>
        <begin position="550"/>
        <end position="568"/>
    </location>
</feature>
<feature type="modified residue" description="Phosphothreonine" evidence="5">
    <location>
        <position position="320"/>
    </location>
</feature>
<feature type="modified residue" description="Phosphoserine" evidence="5">
    <location>
        <position position="563"/>
    </location>
</feature>
<feature type="sequence conflict" description="In Ref. 4; BAD96294." evidence="4" ref="4">
    <original>N</original>
    <variation>S</variation>
    <location>
        <position position="22"/>
    </location>
</feature>
<feature type="sequence conflict" description="In Ref. 6; AAH28239." evidence="4" ref="6">
    <original>K</original>
    <variation>R</variation>
    <location>
        <position position="553"/>
    </location>
</feature>
<gene>
    <name type="primary">CSTF2T</name>
    <name type="synonym">KIAA0689</name>
</gene>
<dbReference type="EMBL" id="AY130299">
    <property type="protein sequence ID" value="AAN05429.1"/>
    <property type="molecule type" value="mRNA"/>
</dbReference>
<dbReference type="EMBL" id="AL136747">
    <property type="protein sequence ID" value="CAB66681.1"/>
    <property type="molecule type" value="mRNA"/>
</dbReference>
<dbReference type="EMBL" id="AK222574">
    <property type="protein sequence ID" value="BAD96294.1"/>
    <property type="molecule type" value="mRNA"/>
</dbReference>
<dbReference type="EMBL" id="AK314318">
    <property type="protein sequence ID" value="BAG36966.1"/>
    <property type="molecule type" value="mRNA"/>
</dbReference>
<dbReference type="EMBL" id="CH471083">
    <property type="protein sequence ID" value="EAW54142.1"/>
    <property type="molecule type" value="Genomic_DNA"/>
</dbReference>
<dbReference type="EMBL" id="BC028239">
    <property type="protein sequence ID" value="AAH28239.1"/>
    <property type="molecule type" value="mRNA"/>
</dbReference>
<dbReference type="EMBL" id="AB014589">
    <property type="protein sequence ID" value="BAA31664.1"/>
    <property type="molecule type" value="mRNA"/>
</dbReference>
<dbReference type="CCDS" id="CCDS7245.1"/>
<dbReference type="RefSeq" id="NP_056050.1">
    <property type="nucleotide sequence ID" value="NM_015235.3"/>
</dbReference>
<dbReference type="SMR" id="Q9H0L4"/>
<dbReference type="BioGRID" id="116881">
    <property type="interactions" value="178"/>
</dbReference>
<dbReference type="ComplexPortal" id="CPX-2703">
    <property type="entry name" value="Cleavage stimulation factor complex, CSTF2T variant"/>
</dbReference>
<dbReference type="FunCoup" id="Q9H0L4">
    <property type="interactions" value="3359"/>
</dbReference>
<dbReference type="IntAct" id="Q9H0L4">
    <property type="interactions" value="60"/>
</dbReference>
<dbReference type="MINT" id="Q9H0L4"/>
<dbReference type="STRING" id="9606.ENSP00000332444"/>
<dbReference type="GlyCosmos" id="Q9H0L4">
    <property type="glycosylation" value="2 sites, 1 glycan"/>
</dbReference>
<dbReference type="GlyGen" id="Q9H0L4">
    <property type="glycosylation" value="3 sites, 1 O-linked glycan (2 sites)"/>
</dbReference>
<dbReference type="iPTMnet" id="Q9H0L4"/>
<dbReference type="MetOSite" id="Q9H0L4"/>
<dbReference type="PhosphoSitePlus" id="Q9H0L4"/>
<dbReference type="BioMuta" id="CSTF2T"/>
<dbReference type="DMDM" id="71153234"/>
<dbReference type="REPRODUCTION-2DPAGE" id="IPI00550906"/>
<dbReference type="jPOST" id="Q9H0L4"/>
<dbReference type="MassIVE" id="Q9H0L4"/>
<dbReference type="PaxDb" id="9606-ENSP00000332444"/>
<dbReference type="PeptideAtlas" id="Q9H0L4"/>
<dbReference type="ProteomicsDB" id="80293"/>
<dbReference type="Pumba" id="Q9H0L4"/>
<dbReference type="Antibodypedia" id="27941">
    <property type="antibodies" value="199 antibodies from 29 providers"/>
</dbReference>
<dbReference type="DNASU" id="23283"/>
<dbReference type="Ensembl" id="ENST00000331173.6">
    <property type="protein sequence ID" value="ENSP00000332444.4"/>
    <property type="gene ID" value="ENSG00000177613.9"/>
</dbReference>
<dbReference type="GeneID" id="23283"/>
<dbReference type="KEGG" id="hsa:23283"/>
<dbReference type="MANE-Select" id="ENST00000331173.6">
    <property type="protein sequence ID" value="ENSP00000332444.4"/>
    <property type="RefSeq nucleotide sequence ID" value="NM_015235.3"/>
    <property type="RefSeq protein sequence ID" value="NP_056050.1"/>
</dbReference>
<dbReference type="UCSC" id="uc001jjp.4">
    <property type="organism name" value="human"/>
</dbReference>
<dbReference type="AGR" id="HGNC:17086"/>
<dbReference type="CTD" id="23283"/>
<dbReference type="DisGeNET" id="23283"/>
<dbReference type="GeneCards" id="CSTF2T"/>
<dbReference type="HGNC" id="HGNC:17086">
    <property type="gene designation" value="CSTF2T"/>
</dbReference>
<dbReference type="HPA" id="ENSG00000177613">
    <property type="expression patterns" value="Low tissue specificity"/>
</dbReference>
<dbReference type="MIM" id="611968">
    <property type="type" value="gene"/>
</dbReference>
<dbReference type="neXtProt" id="NX_Q9H0L4"/>
<dbReference type="OpenTargets" id="ENSG00000177613"/>
<dbReference type="PharmGKB" id="PA134933809"/>
<dbReference type="VEuPathDB" id="HostDB:ENSG00000177613"/>
<dbReference type="eggNOG" id="KOG0108">
    <property type="taxonomic scope" value="Eukaryota"/>
</dbReference>
<dbReference type="GeneTree" id="ENSGT00940000161661"/>
<dbReference type="HOGENOM" id="CLU_028601_3_1_1"/>
<dbReference type="InParanoid" id="Q9H0L4"/>
<dbReference type="OMA" id="QVQMADP"/>
<dbReference type="OrthoDB" id="272703at2759"/>
<dbReference type="PAN-GO" id="Q9H0L4">
    <property type="GO annotations" value="3 GO annotations based on evolutionary models"/>
</dbReference>
<dbReference type="PhylomeDB" id="Q9H0L4"/>
<dbReference type="TreeFam" id="TF314948"/>
<dbReference type="PathwayCommons" id="Q9H0L4"/>
<dbReference type="Reactome" id="R-HSA-72187">
    <property type="pathway name" value="mRNA 3'-end processing"/>
</dbReference>
<dbReference type="Reactome" id="R-HSA-72203">
    <property type="pathway name" value="Processing of Capped Intron-Containing Pre-mRNA"/>
</dbReference>
<dbReference type="Reactome" id="R-HSA-73856">
    <property type="pathway name" value="RNA Polymerase II Transcription Termination"/>
</dbReference>
<dbReference type="Reactome" id="R-HSA-77595">
    <property type="pathway name" value="Processing of Intronless Pre-mRNAs"/>
</dbReference>
<dbReference type="SignaLink" id="Q9H0L4"/>
<dbReference type="BioGRID-ORCS" id="23283">
    <property type="hits" value="11 hits in 1161 CRISPR screens"/>
</dbReference>
<dbReference type="CD-CODE" id="232F8A39">
    <property type="entry name" value="P-body"/>
</dbReference>
<dbReference type="CD-CODE" id="9DBDF226">
    <property type="entry name" value="Synthetic Condensate 000101"/>
</dbReference>
<dbReference type="CD-CODE" id="DEE660B4">
    <property type="entry name" value="Stress granule"/>
</dbReference>
<dbReference type="GeneWiki" id="CSTF2T"/>
<dbReference type="GenomeRNAi" id="23283"/>
<dbReference type="Pharos" id="Q9H0L4">
    <property type="development level" value="Tbio"/>
</dbReference>
<dbReference type="PRO" id="PR:Q9H0L4"/>
<dbReference type="Proteomes" id="UP000005640">
    <property type="component" value="Chromosome 10"/>
</dbReference>
<dbReference type="RNAct" id="Q9H0L4">
    <property type="molecule type" value="protein"/>
</dbReference>
<dbReference type="Bgee" id="ENSG00000177613">
    <property type="expression patterns" value="Expressed in endothelial cell and 211 other cell types or tissues"/>
</dbReference>
<dbReference type="GO" id="GO:0043231">
    <property type="term" value="C:intracellular membrane-bounded organelle"/>
    <property type="evidence" value="ECO:0000314"/>
    <property type="project" value="HPA"/>
</dbReference>
<dbReference type="GO" id="GO:0005847">
    <property type="term" value="C:mRNA cleavage and polyadenylation specificity factor complex"/>
    <property type="evidence" value="ECO:0000318"/>
    <property type="project" value="GO_Central"/>
</dbReference>
<dbReference type="GO" id="GO:0005654">
    <property type="term" value="C:nucleoplasm"/>
    <property type="evidence" value="ECO:0000314"/>
    <property type="project" value="HPA"/>
</dbReference>
<dbReference type="GO" id="GO:0003729">
    <property type="term" value="F:mRNA binding"/>
    <property type="evidence" value="ECO:0000318"/>
    <property type="project" value="GO_Central"/>
</dbReference>
<dbReference type="GO" id="GO:0003723">
    <property type="term" value="F:RNA binding"/>
    <property type="evidence" value="ECO:0007005"/>
    <property type="project" value="UniProtKB"/>
</dbReference>
<dbReference type="GO" id="GO:0031124">
    <property type="term" value="P:mRNA 3'-end processing"/>
    <property type="evidence" value="ECO:0007669"/>
    <property type="project" value="InterPro"/>
</dbReference>
<dbReference type="CDD" id="cd12671">
    <property type="entry name" value="RRM_CSTF2_CSTF2T"/>
    <property type="match status" value="1"/>
</dbReference>
<dbReference type="FunFam" id="1.10.20.70:FF:000001">
    <property type="entry name" value="Cleavage stimulation factor subunit 2"/>
    <property type="match status" value="1"/>
</dbReference>
<dbReference type="FunFam" id="1.25.40.630:FF:000001">
    <property type="entry name" value="Cleavage stimulation factor subunit 2"/>
    <property type="match status" value="1"/>
</dbReference>
<dbReference type="FunFam" id="3.30.70.330:FF:000061">
    <property type="entry name" value="cleavage stimulation factor subunit 2 isoform X1"/>
    <property type="match status" value="1"/>
</dbReference>
<dbReference type="Gene3D" id="1.25.40.630">
    <property type="match status" value="1"/>
</dbReference>
<dbReference type="Gene3D" id="3.30.70.330">
    <property type="match status" value="1"/>
</dbReference>
<dbReference type="Gene3D" id="1.10.20.70">
    <property type="entry name" value="Transcription termination and cleavage factor, C-terminal domain"/>
    <property type="match status" value="1"/>
</dbReference>
<dbReference type="InterPro" id="IPR025742">
    <property type="entry name" value="CSTF2_hinge"/>
</dbReference>
<dbReference type="InterPro" id="IPR026896">
    <property type="entry name" value="CSTF_C"/>
</dbReference>
<dbReference type="InterPro" id="IPR038192">
    <property type="entry name" value="CSTF_C_sf"/>
</dbReference>
<dbReference type="InterPro" id="IPR012677">
    <property type="entry name" value="Nucleotide-bd_a/b_plait_sf"/>
</dbReference>
<dbReference type="InterPro" id="IPR035979">
    <property type="entry name" value="RBD_domain_sf"/>
</dbReference>
<dbReference type="InterPro" id="IPR000504">
    <property type="entry name" value="RRM_dom"/>
</dbReference>
<dbReference type="PANTHER" id="PTHR45735">
    <property type="entry name" value="CLEAVAGE STIMULATION FACTOR SUBUNIT 2"/>
    <property type="match status" value="1"/>
</dbReference>
<dbReference type="PANTHER" id="PTHR45735:SF3">
    <property type="entry name" value="CLEAVAGE STIMULATION FACTOR SUBUNIT 2 TAU VARIANT"/>
    <property type="match status" value="1"/>
</dbReference>
<dbReference type="Pfam" id="PF14327">
    <property type="entry name" value="CSTF2_hinge"/>
    <property type="match status" value="1"/>
</dbReference>
<dbReference type="Pfam" id="PF14304">
    <property type="entry name" value="CSTF_C"/>
    <property type="match status" value="1"/>
</dbReference>
<dbReference type="Pfam" id="PF00076">
    <property type="entry name" value="RRM_1"/>
    <property type="match status" value="1"/>
</dbReference>
<dbReference type="SMART" id="SM00360">
    <property type="entry name" value="RRM"/>
    <property type="match status" value="1"/>
</dbReference>
<dbReference type="SUPFAM" id="SSF54928">
    <property type="entry name" value="RNA-binding domain, RBD"/>
    <property type="match status" value="1"/>
</dbReference>
<dbReference type="PROSITE" id="PS50102">
    <property type="entry name" value="RRM"/>
    <property type="match status" value="1"/>
</dbReference>
<sequence length="616" mass="64437">MSSLAVRDPAMDRSLRSVFVGNIPYEATEEQLKDIFSEVGSVVSFRLVYDRETGKPKGYGFCEYQDQETALSAMRNLNGREFSGRALRVDNAASEKNKEELKSLGPAAPIIDSPYGDPIDPEDAPESITRAVASLPPEQMFELMKQMKLCVQNSHQEARNMLLQNPQLAYALLQAQVVMRIMDPEIALKILHRKIHVTPLIPGKSQSVSVSGPGPGPGPGLCPGPNVLLNQQNPPAPQPQHLARRPVKDIPPLMQTPIQGGIPAPGPIPAAVPGAGPGSLTPGGAMQPQLGMPGVGPVPLERGQVQMSDPRAPIPRGPVTPGGLPPRGLLGDAPNDPRGGTLLSVTGEVEPRGYLGPPHQGPPMHHASGHDTRGPSSHEMRGGPLGDPRLLIGEPRGPMIDQRGLPMDGRGGRDSRAMETRAMETEVLETRVMERRGMETCAMETRGMEARGMDARGLEMRGPVPSSRGPMTGGIQGPGPINIGAGGPPQGPRQVPGISGVGNPGAGMQGTGIQGTGMQGAGIQGGGMQGAGIQGVSIQGGGIQGGGIQGASKQGGSQPSSFSPGQSQVTPQDQEKAALIMQVLQLTADQIAMLPPEQRQSILILKEQIQKSTGAS</sequence>
<reference key="1">
    <citation type="journal article" date="2002" name="Genomics">
        <title>The gene CSTF2T, encoding the human variant CstF-64 polyadenylation protein CstF-64, lacks introns and may be associated with male sterility.</title>
        <authorList>
            <person name="Dass B."/>
            <person name="McDaniel L."/>
            <person name="Schultz R.A."/>
            <person name="Attaya E."/>
            <person name="MacDonald C.C."/>
        </authorList>
    </citation>
    <scope>NUCLEOTIDE SEQUENCE [MRNA]</scope>
    <source>
        <tissue>Testis</tissue>
    </source>
</reference>
<reference key="2">
    <citation type="journal article" date="2001" name="Genome Res.">
        <title>Towards a catalog of human genes and proteins: sequencing and analysis of 500 novel complete protein coding human cDNAs.</title>
        <authorList>
            <person name="Wiemann S."/>
            <person name="Weil B."/>
            <person name="Wellenreuther R."/>
            <person name="Gassenhuber J."/>
            <person name="Glassl S."/>
            <person name="Ansorge W."/>
            <person name="Boecher M."/>
            <person name="Bloecker H."/>
            <person name="Bauersachs S."/>
            <person name="Blum H."/>
            <person name="Lauber J."/>
            <person name="Duesterhoeft A."/>
            <person name="Beyer A."/>
            <person name="Koehrer K."/>
            <person name="Strack N."/>
            <person name="Mewes H.-W."/>
            <person name="Ottenwaelder B."/>
            <person name="Obermaier B."/>
            <person name="Tampe J."/>
            <person name="Heubner D."/>
            <person name="Wambutt R."/>
            <person name="Korn B."/>
            <person name="Klein M."/>
            <person name="Poustka A."/>
        </authorList>
    </citation>
    <scope>NUCLEOTIDE SEQUENCE [LARGE SCALE MRNA]</scope>
    <source>
        <tissue>Testis</tissue>
    </source>
</reference>
<reference key="3">
    <citation type="journal article" date="2004" name="Nat. Genet.">
        <title>Complete sequencing and characterization of 21,243 full-length human cDNAs.</title>
        <authorList>
            <person name="Ota T."/>
            <person name="Suzuki Y."/>
            <person name="Nishikawa T."/>
            <person name="Otsuki T."/>
            <person name="Sugiyama T."/>
            <person name="Irie R."/>
            <person name="Wakamatsu A."/>
            <person name="Hayashi K."/>
            <person name="Sato H."/>
            <person name="Nagai K."/>
            <person name="Kimura K."/>
            <person name="Makita H."/>
            <person name="Sekine M."/>
            <person name="Obayashi M."/>
            <person name="Nishi T."/>
            <person name="Shibahara T."/>
            <person name="Tanaka T."/>
            <person name="Ishii S."/>
            <person name="Yamamoto J."/>
            <person name="Saito K."/>
            <person name="Kawai Y."/>
            <person name="Isono Y."/>
            <person name="Nakamura Y."/>
            <person name="Nagahari K."/>
            <person name="Murakami K."/>
            <person name="Yasuda T."/>
            <person name="Iwayanagi T."/>
            <person name="Wagatsuma M."/>
            <person name="Shiratori A."/>
            <person name="Sudo H."/>
            <person name="Hosoiri T."/>
            <person name="Kaku Y."/>
            <person name="Kodaira H."/>
            <person name="Kondo H."/>
            <person name="Sugawara M."/>
            <person name="Takahashi M."/>
            <person name="Kanda K."/>
            <person name="Yokoi T."/>
            <person name="Furuya T."/>
            <person name="Kikkawa E."/>
            <person name="Omura Y."/>
            <person name="Abe K."/>
            <person name="Kamihara K."/>
            <person name="Katsuta N."/>
            <person name="Sato K."/>
            <person name="Tanikawa M."/>
            <person name="Yamazaki M."/>
            <person name="Ninomiya K."/>
            <person name="Ishibashi T."/>
            <person name="Yamashita H."/>
            <person name="Murakawa K."/>
            <person name="Fujimori K."/>
            <person name="Tanai H."/>
            <person name="Kimata M."/>
            <person name="Watanabe M."/>
            <person name="Hiraoka S."/>
            <person name="Chiba Y."/>
            <person name="Ishida S."/>
            <person name="Ono Y."/>
            <person name="Takiguchi S."/>
            <person name="Watanabe S."/>
            <person name="Yosida M."/>
            <person name="Hotuta T."/>
            <person name="Kusano J."/>
            <person name="Kanehori K."/>
            <person name="Takahashi-Fujii A."/>
            <person name="Hara H."/>
            <person name="Tanase T.-O."/>
            <person name="Nomura Y."/>
            <person name="Togiya S."/>
            <person name="Komai F."/>
            <person name="Hara R."/>
            <person name="Takeuchi K."/>
            <person name="Arita M."/>
            <person name="Imose N."/>
            <person name="Musashino K."/>
            <person name="Yuuki H."/>
            <person name="Oshima A."/>
            <person name="Sasaki N."/>
            <person name="Aotsuka S."/>
            <person name="Yoshikawa Y."/>
            <person name="Matsunawa H."/>
            <person name="Ichihara T."/>
            <person name="Shiohata N."/>
            <person name="Sano S."/>
            <person name="Moriya S."/>
            <person name="Momiyama H."/>
            <person name="Satoh N."/>
            <person name="Takami S."/>
            <person name="Terashima Y."/>
            <person name="Suzuki O."/>
            <person name="Nakagawa S."/>
            <person name="Senoh A."/>
            <person name="Mizoguchi H."/>
            <person name="Goto Y."/>
            <person name="Shimizu F."/>
            <person name="Wakebe H."/>
            <person name="Hishigaki H."/>
            <person name="Watanabe T."/>
            <person name="Sugiyama A."/>
            <person name="Takemoto M."/>
            <person name="Kawakami B."/>
            <person name="Yamazaki M."/>
            <person name="Watanabe K."/>
            <person name="Kumagai A."/>
            <person name="Itakura S."/>
            <person name="Fukuzumi Y."/>
            <person name="Fujimori Y."/>
            <person name="Komiyama M."/>
            <person name="Tashiro H."/>
            <person name="Tanigami A."/>
            <person name="Fujiwara T."/>
            <person name="Ono T."/>
            <person name="Yamada K."/>
            <person name="Fujii Y."/>
            <person name="Ozaki K."/>
            <person name="Hirao M."/>
            <person name="Ohmori Y."/>
            <person name="Kawabata A."/>
            <person name="Hikiji T."/>
            <person name="Kobatake N."/>
            <person name="Inagaki H."/>
            <person name="Ikema Y."/>
            <person name="Okamoto S."/>
            <person name="Okitani R."/>
            <person name="Kawakami T."/>
            <person name="Noguchi S."/>
            <person name="Itoh T."/>
            <person name="Shigeta K."/>
            <person name="Senba T."/>
            <person name="Matsumura K."/>
            <person name="Nakajima Y."/>
            <person name="Mizuno T."/>
            <person name="Morinaga M."/>
            <person name="Sasaki M."/>
            <person name="Togashi T."/>
            <person name="Oyama M."/>
            <person name="Hata H."/>
            <person name="Watanabe M."/>
            <person name="Komatsu T."/>
            <person name="Mizushima-Sugano J."/>
            <person name="Satoh T."/>
            <person name="Shirai Y."/>
            <person name="Takahashi Y."/>
            <person name="Nakagawa K."/>
            <person name="Okumura K."/>
            <person name="Nagase T."/>
            <person name="Nomura N."/>
            <person name="Kikuchi H."/>
            <person name="Masuho Y."/>
            <person name="Yamashita R."/>
            <person name="Nakai K."/>
            <person name="Yada T."/>
            <person name="Nakamura Y."/>
            <person name="Ohara O."/>
            <person name="Isogai T."/>
            <person name="Sugano S."/>
        </authorList>
    </citation>
    <scope>NUCLEOTIDE SEQUENCE [LARGE SCALE MRNA]</scope>
    <source>
        <tissue>Placenta</tissue>
    </source>
</reference>
<reference key="4">
    <citation type="submission" date="2005-04" db="EMBL/GenBank/DDBJ databases">
        <authorList>
            <person name="Suzuki Y."/>
            <person name="Sugano S."/>
            <person name="Totoki Y."/>
            <person name="Toyoda A."/>
            <person name="Takeda T."/>
            <person name="Sakaki Y."/>
            <person name="Tanaka A."/>
            <person name="Yokoyama S."/>
        </authorList>
    </citation>
    <scope>NUCLEOTIDE SEQUENCE [LARGE SCALE MRNA]</scope>
    <source>
        <tissue>Coronary artery</tissue>
    </source>
</reference>
<reference key="5">
    <citation type="submission" date="2005-07" db="EMBL/GenBank/DDBJ databases">
        <authorList>
            <person name="Mural R.J."/>
            <person name="Istrail S."/>
            <person name="Sutton G.G."/>
            <person name="Florea L."/>
            <person name="Halpern A.L."/>
            <person name="Mobarry C.M."/>
            <person name="Lippert R."/>
            <person name="Walenz B."/>
            <person name="Shatkay H."/>
            <person name="Dew I."/>
            <person name="Miller J.R."/>
            <person name="Flanigan M.J."/>
            <person name="Edwards N.J."/>
            <person name="Bolanos R."/>
            <person name="Fasulo D."/>
            <person name="Halldorsson B.V."/>
            <person name="Hannenhalli S."/>
            <person name="Turner R."/>
            <person name="Yooseph S."/>
            <person name="Lu F."/>
            <person name="Nusskern D.R."/>
            <person name="Shue B.C."/>
            <person name="Zheng X.H."/>
            <person name="Zhong F."/>
            <person name="Delcher A.L."/>
            <person name="Huson D.H."/>
            <person name="Kravitz S.A."/>
            <person name="Mouchard L."/>
            <person name="Reinert K."/>
            <person name="Remington K.A."/>
            <person name="Clark A.G."/>
            <person name="Waterman M.S."/>
            <person name="Eichler E.E."/>
            <person name="Adams M.D."/>
            <person name="Hunkapiller M.W."/>
            <person name="Myers E.W."/>
            <person name="Venter J.C."/>
        </authorList>
    </citation>
    <scope>NUCLEOTIDE SEQUENCE [LARGE SCALE GENOMIC DNA]</scope>
</reference>
<reference key="6">
    <citation type="journal article" date="2004" name="Genome Res.">
        <title>The status, quality, and expansion of the NIH full-length cDNA project: the Mammalian Gene Collection (MGC).</title>
        <authorList>
            <consortium name="The MGC Project Team"/>
        </authorList>
    </citation>
    <scope>NUCLEOTIDE SEQUENCE [LARGE SCALE MRNA]</scope>
    <source>
        <tissue>Brain</tissue>
    </source>
</reference>
<reference key="7">
    <citation type="journal article" date="1998" name="DNA Res.">
        <title>Prediction of the coding sequences of unidentified human genes. X. The complete sequences of 100 new cDNA clones from brain which can code for large proteins in vitro.</title>
        <authorList>
            <person name="Ishikawa K."/>
            <person name="Nagase T."/>
            <person name="Suyama M."/>
            <person name="Miyajima N."/>
            <person name="Tanaka A."/>
            <person name="Kotani H."/>
            <person name="Nomura N."/>
            <person name="Ohara O."/>
        </authorList>
    </citation>
    <scope>NUCLEOTIDE SEQUENCE [LARGE SCALE MRNA] OF 70-616</scope>
    <source>
        <tissue>Brain</tissue>
    </source>
</reference>
<reference key="8">
    <citation type="journal article" date="2009" name="Anal. Chem.">
        <title>Lys-N and trypsin cover complementary parts of the phosphoproteome in a refined SCX-based approach.</title>
        <authorList>
            <person name="Gauci S."/>
            <person name="Helbig A.O."/>
            <person name="Slijper M."/>
            <person name="Krijgsveld J."/>
            <person name="Heck A.J."/>
            <person name="Mohammed S."/>
        </authorList>
    </citation>
    <scope>IDENTIFICATION BY MASS SPECTROMETRY [LARGE SCALE ANALYSIS]</scope>
</reference>
<reference key="9">
    <citation type="journal article" date="2009" name="Sci. Signal.">
        <title>Quantitative phosphoproteomic analysis of T cell receptor signaling reveals system-wide modulation of protein-protein interactions.</title>
        <authorList>
            <person name="Mayya V."/>
            <person name="Lundgren D.H."/>
            <person name="Hwang S.-I."/>
            <person name="Rezaul K."/>
            <person name="Wu L."/>
            <person name="Eng J.K."/>
            <person name="Rodionov V."/>
            <person name="Han D.K."/>
        </authorList>
    </citation>
    <scope>IDENTIFICATION BY MASS SPECTROMETRY [LARGE SCALE ANALYSIS]</scope>
    <source>
        <tissue>Leukemic T-cell</tissue>
    </source>
</reference>
<reference key="10">
    <citation type="journal article" date="2011" name="BMC Syst. Biol.">
        <title>Initial characterization of the human central proteome.</title>
        <authorList>
            <person name="Burkard T.R."/>
            <person name="Planyavsky M."/>
            <person name="Kaupe I."/>
            <person name="Breitwieser F.P."/>
            <person name="Buerckstuemmer T."/>
            <person name="Bennett K.L."/>
            <person name="Superti-Furga G."/>
            <person name="Colinge J."/>
        </authorList>
    </citation>
    <scope>IDENTIFICATION BY MASS SPECTROMETRY [LARGE SCALE ANALYSIS]</scope>
</reference>
<reference key="11">
    <citation type="journal article" date="2011" name="Sci. Signal.">
        <title>System-wide temporal characterization of the proteome and phosphoproteome of human embryonic stem cell differentiation.</title>
        <authorList>
            <person name="Rigbolt K.T."/>
            <person name="Prokhorova T.A."/>
            <person name="Akimov V."/>
            <person name="Henningsen J."/>
            <person name="Johansen P.T."/>
            <person name="Kratchmarova I."/>
            <person name="Kassem M."/>
            <person name="Mann M."/>
            <person name="Olsen J.V."/>
            <person name="Blagoev B."/>
        </authorList>
    </citation>
    <scope>IDENTIFICATION BY MASS SPECTROMETRY [LARGE SCALE ANALYSIS]</scope>
</reference>
<reference key="12">
    <citation type="journal article" date="2013" name="J. Proteome Res.">
        <title>Toward a comprehensive characterization of a human cancer cell phosphoproteome.</title>
        <authorList>
            <person name="Zhou H."/>
            <person name="Di Palma S."/>
            <person name="Preisinger C."/>
            <person name="Peng M."/>
            <person name="Polat A.N."/>
            <person name="Heck A.J."/>
            <person name="Mohammed S."/>
        </authorList>
    </citation>
    <scope>PHOSPHORYLATION [LARGE SCALE ANALYSIS] AT THR-320 AND SER-563</scope>
    <scope>IDENTIFICATION BY MASS SPECTROMETRY [LARGE SCALE ANALYSIS]</scope>
    <source>
        <tissue>Cervix carcinoma</tissue>
        <tissue>Erythroleukemia</tissue>
    </source>
</reference>
<name>CSTFT_HUMAN</name>
<protein>
    <recommendedName>
        <fullName>Cleavage stimulation factor subunit 2 tau variant</fullName>
    </recommendedName>
    <alternativeName>
        <fullName>CF-1 64 kDa subunit tau variant</fullName>
    </alternativeName>
    <alternativeName>
        <fullName>Cleavage stimulation factor 64 kDa subunit tau variant</fullName>
        <shortName>CSTF 64 kDa subunit tau variant</shortName>
    </alternativeName>
    <alternativeName>
        <fullName>TauCstF-64</fullName>
    </alternativeName>
</protein>
<evidence type="ECO:0000250" key="1"/>
<evidence type="ECO:0000255" key="2">
    <source>
        <dbReference type="PROSITE-ProRule" id="PRU00176"/>
    </source>
</evidence>
<evidence type="ECO:0000256" key="3">
    <source>
        <dbReference type="SAM" id="MobiDB-lite"/>
    </source>
</evidence>
<evidence type="ECO:0000305" key="4"/>
<evidence type="ECO:0007744" key="5">
    <source>
    </source>
</evidence>
<comment type="function">
    <text evidence="1">May play a significant role in AAUAAA-independent mRNA polyadenylation in germ cells. Directly involved in the binding to pre-mRNAs (By similarity).</text>
</comment>
<comment type="interaction">
    <interactant intactId="EBI-747012">
        <id>Q9H0L4</id>
    </interactant>
    <interactant intactId="EBI-357530">
        <id>Q9ULX6</id>
        <label>AKAP8L</label>
    </interactant>
    <organismsDiffer>false</organismsDiffer>
    <experiments>3</experiments>
</comment>
<comment type="interaction">
    <interactant intactId="EBI-747012">
        <id>Q9H0L4</id>
    </interactant>
    <interactant intactId="EBI-12811889">
        <id>Q9Y6H3</id>
        <label>ATP23</label>
    </interactant>
    <organismsDiffer>false</organismsDiffer>
    <experiments>3</experiments>
</comment>
<comment type="interaction">
    <interactant intactId="EBI-747012">
        <id>Q9H0L4</id>
    </interactant>
    <interactant intactId="EBI-2528742">
        <id>Q9UMD9</id>
        <label>COL17A1</label>
    </interactant>
    <organismsDiffer>false</organismsDiffer>
    <experiments>3</experiments>
</comment>
<comment type="interaction">
    <interactant intactId="EBI-747012">
        <id>Q9H0L4</id>
    </interactant>
    <interactant intactId="EBI-1188472">
        <id>P78358</id>
        <label>CTAG1B</label>
    </interactant>
    <organismsDiffer>false</organismsDiffer>
    <experiments>3</experiments>
</comment>
<comment type="interaction">
    <interactant intactId="EBI-747012">
        <id>Q9H0L4</id>
    </interactant>
    <interactant intactId="EBI-751587">
        <id>Q9GZU7</id>
        <label>CTDSP1</label>
    </interactant>
    <organismsDiffer>false</organismsDiffer>
    <experiments>3</experiments>
</comment>
<comment type="interaction">
    <interactant intactId="EBI-747012">
        <id>Q9H0L4</id>
    </interactant>
    <interactant intactId="EBI-12193763">
        <id>A1KXE4-2</id>
        <label>FAM168B</label>
    </interactant>
    <organismsDiffer>false</organismsDiffer>
    <experiments>3</experiments>
</comment>
<comment type="interaction">
    <interactant intactId="EBI-747012">
        <id>Q9H0L4</id>
    </interactant>
    <interactant intactId="EBI-12018822">
        <id>Q12951-2</id>
        <label>FOXI1</label>
    </interactant>
    <organismsDiffer>false</organismsDiffer>
    <experiments>3</experiments>
</comment>
<comment type="interaction">
    <interactant intactId="EBI-747012">
        <id>Q9H0L4</id>
    </interactant>
    <interactant intactId="EBI-2869608">
        <id>Q9P0K8</id>
        <label>FOXJ2</label>
    </interactant>
    <organismsDiffer>false</organismsDiffer>
    <experiments>3</experiments>
</comment>
<comment type="interaction">
    <interactant intactId="EBI-747012">
        <id>Q9H0L4</id>
    </interactant>
    <interactant intactId="EBI-740220">
        <id>O14964</id>
        <label>HGS</label>
    </interactant>
    <organismsDiffer>false</organismsDiffer>
    <experiments>3</experiments>
</comment>
<comment type="interaction">
    <interactant intactId="EBI-747012">
        <id>Q9H0L4</id>
    </interactant>
    <interactant intactId="EBI-9088686">
        <id>Q14847-2</id>
        <label>LASP1</label>
    </interactant>
    <organismsDiffer>false</organismsDiffer>
    <experiments>3</experiments>
</comment>
<comment type="interaction">
    <interactant intactId="EBI-747012">
        <id>Q9H0L4</id>
    </interactant>
    <interactant intactId="EBI-2692890">
        <id>Q96KN3</id>
        <label>PKNOX2</label>
    </interactant>
    <organismsDiffer>false</organismsDiffer>
    <experiments>5</experiments>
</comment>
<comment type="interaction">
    <interactant intactId="EBI-747012">
        <id>Q9H0L4</id>
    </interactant>
    <interactant intactId="EBI-347919">
        <id>Q9H7B4</id>
        <label>SMYD3</label>
    </interactant>
    <organismsDiffer>false</organismsDiffer>
    <experiments>3</experiments>
</comment>
<comment type="interaction">
    <interactant intactId="EBI-747012">
        <id>Q9H0L4</id>
    </interactant>
    <interactant intactId="EBI-11959123">
        <id>Q99932-2</id>
        <label>SPAG8</label>
    </interactant>
    <organismsDiffer>false</organismsDiffer>
    <experiments>3</experiments>
</comment>
<comment type="interaction">
    <interactant intactId="EBI-747012">
        <id>Q9H0L4</id>
    </interactant>
    <interactant intactId="EBI-12843506">
        <id>Q8IWL8</id>
        <label>STH</label>
    </interactant>
    <organismsDiffer>false</organismsDiffer>
    <experiments>5</experiments>
</comment>
<comment type="interaction">
    <interactant intactId="EBI-747012">
        <id>Q9H0L4</id>
    </interactant>
    <interactant intactId="EBI-11741437">
        <id>Q08117-2</id>
        <label>TLE5</label>
    </interactant>
    <organismsDiffer>false</organismsDiffer>
    <experiments>6</experiments>
</comment>
<comment type="interaction">
    <interactant intactId="EBI-747012">
        <id>Q9H0L4</id>
    </interactant>
    <interactant intactId="EBI-12815137">
        <id>Q96NM4-3</id>
        <label>TOX2</label>
    </interactant>
    <organismsDiffer>false</organismsDiffer>
    <experiments>3</experiments>
</comment>
<comment type="interaction">
    <interactant intactId="EBI-747012">
        <id>Q9H0L4</id>
    </interactant>
    <interactant intactId="EBI-741480">
        <id>Q9UMX0</id>
        <label>UBQLN1</label>
    </interactant>
    <organismsDiffer>false</organismsDiffer>
    <experiments>7</experiments>
</comment>
<comment type="interaction">
    <interactant intactId="EBI-747012">
        <id>Q9H0L4</id>
    </interactant>
    <interactant intactId="EBI-10173939">
        <id>Q9UMX0-2</id>
        <label>UBQLN1</label>
    </interactant>
    <organismsDiffer>false</organismsDiffer>
    <experiments>3</experiments>
</comment>
<comment type="interaction">
    <interactant intactId="EBI-747012">
        <id>Q9H0L4</id>
    </interactant>
    <interactant intactId="EBI-947187">
        <id>Q9UHD9</id>
        <label>UBQLN2</label>
    </interactant>
    <organismsDiffer>false</organismsDiffer>
    <experiments>5</experiments>
</comment>
<comment type="interaction">
    <interactant intactId="EBI-747012">
        <id>Q9H0L4</id>
    </interactant>
    <interactant intactId="EBI-17234977">
        <id>A0A1U9X8X8</id>
    </interactant>
    <organismsDiffer>false</organismsDiffer>
    <experiments>3</experiments>
</comment>
<comment type="subcellular location">
    <subcellularLocation>
        <location evidence="1">Nucleus</location>
    </subcellularLocation>
</comment>
<organism>
    <name type="scientific">Homo sapiens</name>
    <name type="common">Human</name>
    <dbReference type="NCBI Taxonomy" id="9606"/>
    <lineage>
        <taxon>Eukaryota</taxon>
        <taxon>Metazoa</taxon>
        <taxon>Chordata</taxon>
        <taxon>Craniata</taxon>
        <taxon>Vertebrata</taxon>
        <taxon>Euteleostomi</taxon>
        <taxon>Mammalia</taxon>
        <taxon>Eutheria</taxon>
        <taxon>Euarchontoglires</taxon>
        <taxon>Primates</taxon>
        <taxon>Haplorrhini</taxon>
        <taxon>Catarrhini</taxon>
        <taxon>Hominidae</taxon>
        <taxon>Homo</taxon>
    </lineage>
</organism>